<name>UIDR_ECO57</name>
<accession>P0ACT8</accession>
<accession>P76892</accession>
<accession>P76895</accession>
<accession>Q59431</accession>
<sequence>MMDNMQTEAQPTRTRILNAAREIFSENGFHSASMKAICKSCAISPGTLYHHFISKEALIQAIILQDQERALARFREPIEGIHFVDYMVESIVSLTHEAFGQRALVVEIMAEGMRNPQVAAMLKNKHMTITEFVAQRMRDAQQKGEISPDINTAMTSRLLLDLTYGVLADIEAEDLAREASFAQGLRAMIGGILTAS</sequence>
<comment type="function">
    <text evidence="1">Repressor for the uidRABC (gusRABC) operon.</text>
</comment>
<organism>
    <name type="scientific">Escherichia coli O157:H7</name>
    <dbReference type="NCBI Taxonomy" id="83334"/>
    <lineage>
        <taxon>Bacteria</taxon>
        <taxon>Pseudomonadati</taxon>
        <taxon>Pseudomonadota</taxon>
        <taxon>Gammaproteobacteria</taxon>
        <taxon>Enterobacterales</taxon>
        <taxon>Enterobacteriaceae</taxon>
        <taxon>Escherichia</taxon>
    </lineage>
</organism>
<reference key="1">
    <citation type="journal article" date="2001" name="Nature">
        <title>Genome sequence of enterohaemorrhagic Escherichia coli O157:H7.</title>
        <authorList>
            <person name="Perna N.T."/>
            <person name="Plunkett G. III"/>
            <person name="Burland V."/>
            <person name="Mau B."/>
            <person name="Glasner J.D."/>
            <person name="Rose D.J."/>
            <person name="Mayhew G.F."/>
            <person name="Evans P.S."/>
            <person name="Gregor J."/>
            <person name="Kirkpatrick H.A."/>
            <person name="Posfai G."/>
            <person name="Hackett J."/>
            <person name="Klink S."/>
            <person name="Boutin A."/>
            <person name="Shao Y."/>
            <person name="Miller L."/>
            <person name="Grotbeck E.J."/>
            <person name="Davis N.W."/>
            <person name="Lim A."/>
            <person name="Dimalanta E.T."/>
            <person name="Potamousis K."/>
            <person name="Apodaca J."/>
            <person name="Anantharaman T.S."/>
            <person name="Lin J."/>
            <person name="Yen G."/>
            <person name="Schwartz D.C."/>
            <person name="Welch R.A."/>
            <person name="Blattner F.R."/>
        </authorList>
    </citation>
    <scope>NUCLEOTIDE SEQUENCE [LARGE SCALE GENOMIC DNA]</scope>
    <source>
        <strain>O157:H7 / EDL933 / ATCC 700927 / EHEC</strain>
    </source>
</reference>
<reference key="2">
    <citation type="journal article" date="2001" name="DNA Res.">
        <title>Complete genome sequence of enterohemorrhagic Escherichia coli O157:H7 and genomic comparison with a laboratory strain K-12.</title>
        <authorList>
            <person name="Hayashi T."/>
            <person name="Makino K."/>
            <person name="Ohnishi M."/>
            <person name="Kurokawa K."/>
            <person name="Ishii K."/>
            <person name="Yokoyama K."/>
            <person name="Han C.-G."/>
            <person name="Ohtsubo E."/>
            <person name="Nakayama K."/>
            <person name="Murata T."/>
            <person name="Tanaka M."/>
            <person name="Tobe T."/>
            <person name="Iida T."/>
            <person name="Takami H."/>
            <person name="Honda T."/>
            <person name="Sasakawa C."/>
            <person name="Ogasawara N."/>
            <person name="Yasunaga T."/>
            <person name="Kuhara S."/>
            <person name="Shiba T."/>
            <person name="Hattori M."/>
            <person name="Shinagawa H."/>
        </authorList>
    </citation>
    <scope>NUCLEOTIDE SEQUENCE [LARGE SCALE GENOMIC DNA]</scope>
    <source>
        <strain>O157:H7 / Sakai / RIMD 0509952 / EHEC</strain>
    </source>
</reference>
<feature type="chain" id="PRO_0000070629" description="HTH-type transcriptional regulator UidR">
    <location>
        <begin position="1"/>
        <end position="196"/>
    </location>
</feature>
<feature type="domain" description="HTH tetR-type" evidence="2">
    <location>
        <begin position="10"/>
        <end position="70"/>
    </location>
</feature>
<feature type="DNA-binding region" description="H-T-H motif" evidence="2">
    <location>
        <begin position="33"/>
        <end position="52"/>
    </location>
</feature>
<evidence type="ECO:0000250" key="1"/>
<evidence type="ECO:0000255" key="2">
    <source>
        <dbReference type="PROSITE-ProRule" id="PRU00335"/>
    </source>
</evidence>
<keyword id="KW-0238">DNA-binding</keyword>
<keyword id="KW-1185">Reference proteome</keyword>
<keyword id="KW-0678">Repressor</keyword>
<keyword id="KW-0804">Transcription</keyword>
<keyword id="KW-0805">Transcription regulation</keyword>
<dbReference type="EMBL" id="AE005174">
    <property type="protein sequence ID" value="AAG56607.1"/>
    <property type="molecule type" value="Genomic_DNA"/>
</dbReference>
<dbReference type="EMBL" id="BA000007">
    <property type="protein sequence ID" value="BAB35749.1"/>
    <property type="molecule type" value="Genomic_DNA"/>
</dbReference>
<dbReference type="PIR" id="C85768">
    <property type="entry name" value="C85768"/>
</dbReference>
<dbReference type="PIR" id="F90919">
    <property type="entry name" value="F90919"/>
</dbReference>
<dbReference type="RefSeq" id="NP_310353.1">
    <property type="nucleotide sequence ID" value="NC_002695.1"/>
</dbReference>
<dbReference type="RefSeq" id="WP_000969092.1">
    <property type="nucleotide sequence ID" value="NZ_SWKA01000004.1"/>
</dbReference>
<dbReference type="SMR" id="P0ACT8"/>
<dbReference type="STRING" id="155864.Z2623"/>
<dbReference type="GeneID" id="75171678"/>
<dbReference type="GeneID" id="913631"/>
<dbReference type="KEGG" id="ece:Z2623"/>
<dbReference type="KEGG" id="ecs:ECs_2326"/>
<dbReference type="PATRIC" id="fig|386585.9.peg.2436"/>
<dbReference type="eggNOG" id="COG1309">
    <property type="taxonomic scope" value="Bacteria"/>
</dbReference>
<dbReference type="HOGENOM" id="CLU_069356_15_12_6"/>
<dbReference type="OMA" id="AINHYFS"/>
<dbReference type="Proteomes" id="UP000000558">
    <property type="component" value="Chromosome"/>
</dbReference>
<dbReference type="Proteomes" id="UP000002519">
    <property type="component" value="Chromosome"/>
</dbReference>
<dbReference type="GO" id="GO:0003700">
    <property type="term" value="F:DNA-binding transcription factor activity"/>
    <property type="evidence" value="ECO:0007669"/>
    <property type="project" value="TreeGrafter"/>
</dbReference>
<dbReference type="GO" id="GO:0000976">
    <property type="term" value="F:transcription cis-regulatory region binding"/>
    <property type="evidence" value="ECO:0007669"/>
    <property type="project" value="TreeGrafter"/>
</dbReference>
<dbReference type="Gene3D" id="1.10.357.10">
    <property type="entry name" value="Tetracycline Repressor, domain 2"/>
    <property type="match status" value="1"/>
</dbReference>
<dbReference type="InterPro" id="IPR023772">
    <property type="entry name" value="DNA-bd_HTH_TetR-type_CS"/>
</dbReference>
<dbReference type="InterPro" id="IPR009057">
    <property type="entry name" value="Homeodomain-like_sf"/>
</dbReference>
<dbReference type="InterPro" id="IPR050109">
    <property type="entry name" value="HTH-type_TetR-like_transc_reg"/>
</dbReference>
<dbReference type="InterPro" id="IPR001647">
    <property type="entry name" value="HTH_TetR"/>
</dbReference>
<dbReference type="InterPro" id="IPR036271">
    <property type="entry name" value="Tet_transcr_reg_TetR-rel_C_sf"/>
</dbReference>
<dbReference type="PANTHER" id="PTHR30055">
    <property type="entry name" value="HTH-TYPE TRANSCRIPTIONAL REGULATOR RUTR"/>
    <property type="match status" value="1"/>
</dbReference>
<dbReference type="PANTHER" id="PTHR30055:SF223">
    <property type="entry name" value="HTH-TYPE TRANSCRIPTIONAL REGULATOR UIDR"/>
    <property type="match status" value="1"/>
</dbReference>
<dbReference type="Pfam" id="PF00440">
    <property type="entry name" value="TetR_N"/>
    <property type="match status" value="1"/>
</dbReference>
<dbReference type="PRINTS" id="PR00455">
    <property type="entry name" value="HTHTETR"/>
</dbReference>
<dbReference type="SUPFAM" id="SSF46689">
    <property type="entry name" value="Homeodomain-like"/>
    <property type="match status" value="1"/>
</dbReference>
<dbReference type="SUPFAM" id="SSF48498">
    <property type="entry name" value="Tetracyclin repressor-like, C-terminal domain"/>
    <property type="match status" value="1"/>
</dbReference>
<dbReference type="PROSITE" id="PS01081">
    <property type="entry name" value="HTH_TETR_1"/>
    <property type="match status" value="1"/>
</dbReference>
<dbReference type="PROSITE" id="PS50977">
    <property type="entry name" value="HTH_TETR_2"/>
    <property type="match status" value="1"/>
</dbReference>
<proteinExistence type="inferred from homology"/>
<gene>
    <name type="primary">uidR</name>
    <name type="ordered locus">Z2623</name>
    <name type="ordered locus">ECs2326</name>
</gene>
<protein>
    <recommendedName>
        <fullName>HTH-type transcriptional regulator UidR</fullName>
    </recommendedName>
    <alternativeName>
        <fullName>Uid operon repressor</fullName>
    </alternativeName>
</protein>